<organism>
    <name type="scientific">Clostridium botulinum (strain 657 / Type Ba4)</name>
    <dbReference type="NCBI Taxonomy" id="515621"/>
    <lineage>
        <taxon>Bacteria</taxon>
        <taxon>Bacillati</taxon>
        <taxon>Bacillota</taxon>
        <taxon>Clostridia</taxon>
        <taxon>Eubacteriales</taxon>
        <taxon>Clostridiaceae</taxon>
        <taxon>Clostridium</taxon>
    </lineage>
</organism>
<gene>
    <name evidence="1" type="primary">rpmH</name>
    <name type="ordered locus">CLJ_B3987</name>
</gene>
<accession>C3KWK0</accession>
<keyword id="KW-0687">Ribonucleoprotein</keyword>
<keyword id="KW-0689">Ribosomal protein</keyword>
<comment type="similarity">
    <text evidence="1">Belongs to the bacterial ribosomal protein bL34 family.</text>
</comment>
<proteinExistence type="inferred from homology"/>
<reference key="1">
    <citation type="submission" date="2008-05" db="EMBL/GenBank/DDBJ databases">
        <title>Genome sequence of Clostridium botulinum Ba4 strain 657.</title>
        <authorList>
            <person name="Shrivastava S."/>
            <person name="Brown J.L."/>
            <person name="Bruce D."/>
            <person name="Detter C."/>
            <person name="Munk C."/>
            <person name="Smith L.A."/>
            <person name="Smith T.J."/>
            <person name="Sutton G."/>
            <person name="Brettin T.S."/>
        </authorList>
    </citation>
    <scope>NUCLEOTIDE SEQUENCE [LARGE SCALE GENOMIC DNA]</scope>
    <source>
        <strain>657 / Type Ba4</strain>
    </source>
</reference>
<feature type="chain" id="PRO_1000205819" description="Large ribosomal subunit protein bL34">
    <location>
        <begin position="1"/>
        <end position="44"/>
    </location>
</feature>
<feature type="region of interest" description="Disordered" evidence="2">
    <location>
        <begin position="1"/>
        <end position="44"/>
    </location>
</feature>
<feature type="compositionally biased region" description="Basic residues" evidence="2">
    <location>
        <begin position="7"/>
        <end position="23"/>
    </location>
</feature>
<feature type="compositionally biased region" description="Basic residues" evidence="2">
    <location>
        <begin position="30"/>
        <end position="44"/>
    </location>
</feature>
<dbReference type="EMBL" id="CP001083">
    <property type="protein sequence ID" value="ACQ51750.1"/>
    <property type="molecule type" value="Genomic_DNA"/>
</dbReference>
<dbReference type="RefSeq" id="WP_003359452.1">
    <property type="nucleotide sequence ID" value="NC_012658.1"/>
</dbReference>
<dbReference type="SMR" id="C3KWK0"/>
<dbReference type="GeneID" id="92940449"/>
<dbReference type="KEGG" id="cbi:CLJ_B3987"/>
<dbReference type="HOGENOM" id="CLU_129938_2_0_9"/>
<dbReference type="Proteomes" id="UP000002333">
    <property type="component" value="Chromosome"/>
</dbReference>
<dbReference type="GO" id="GO:1990904">
    <property type="term" value="C:ribonucleoprotein complex"/>
    <property type="evidence" value="ECO:0007669"/>
    <property type="project" value="UniProtKB-KW"/>
</dbReference>
<dbReference type="GO" id="GO:0005840">
    <property type="term" value="C:ribosome"/>
    <property type="evidence" value="ECO:0007669"/>
    <property type="project" value="UniProtKB-KW"/>
</dbReference>
<dbReference type="GO" id="GO:0003735">
    <property type="term" value="F:structural constituent of ribosome"/>
    <property type="evidence" value="ECO:0007669"/>
    <property type="project" value="InterPro"/>
</dbReference>
<dbReference type="GO" id="GO:0006412">
    <property type="term" value="P:translation"/>
    <property type="evidence" value="ECO:0007669"/>
    <property type="project" value="UniProtKB-UniRule"/>
</dbReference>
<dbReference type="FunFam" id="1.10.287.3980:FF:000001">
    <property type="entry name" value="Mitochondrial ribosomal protein L34"/>
    <property type="match status" value="1"/>
</dbReference>
<dbReference type="Gene3D" id="1.10.287.3980">
    <property type="match status" value="1"/>
</dbReference>
<dbReference type="HAMAP" id="MF_00391">
    <property type="entry name" value="Ribosomal_bL34"/>
    <property type="match status" value="1"/>
</dbReference>
<dbReference type="InterPro" id="IPR000271">
    <property type="entry name" value="Ribosomal_bL34"/>
</dbReference>
<dbReference type="InterPro" id="IPR020939">
    <property type="entry name" value="Ribosomal_bL34_CS"/>
</dbReference>
<dbReference type="NCBIfam" id="TIGR01030">
    <property type="entry name" value="rpmH_bact"/>
    <property type="match status" value="1"/>
</dbReference>
<dbReference type="PANTHER" id="PTHR14503:SF4">
    <property type="entry name" value="LARGE RIBOSOMAL SUBUNIT PROTEIN BL34M"/>
    <property type="match status" value="1"/>
</dbReference>
<dbReference type="PANTHER" id="PTHR14503">
    <property type="entry name" value="MITOCHONDRIAL RIBOSOMAL PROTEIN 34 FAMILY MEMBER"/>
    <property type="match status" value="1"/>
</dbReference>
<dbReference type="Pfam" id="PF00468">
    <property type="entry name" value="Ribosomal_L34"/>
    <property type="match status" value="1"/>
</dbReference>
<dbReference type="PROSITE" id="PS00784">
    <property type="entry name" value="RIBOSOMAL_L34"/>
    <property type="match status" value="1"/>
</dbReference>
<sequence>MFMTYQPKKRQRKKEHGFRKRMKTSSGRNILRKRRQKGRKRLTA</sequence>
<name>RL34_CLOB6</name>
<protein>
    <recommendedName>
        <fullName evidence="1">Large ribosomal subunit protein bL34</fullName>
    </recommendedName>
    <alternativeName>
        <fullName evidence="3">50S ribosomal protein L34</fullName>
    </alternativeName>
</protein>
<evidence type="ECO:0000255" key="1">
    <source>
        <dbReference type="HAMAP-Rule" id="MF_00391"/>
    </source>
</evidence>
<evidence type="ECO:0000256" key="2">
    <source>
        <dbReference type="SAM" id="MobiDB-lite"/>
    </source>
</evidence>
<evidence type="ECO:0000305" key="3"/>